<protein>
    <recommendedName>
        <fullName>Photoreceptor outer segment membrane glycoprotein 2</fullName>
    </recommendedName>
    <alternativeName>
        <fullName>CRDS2</fullName>
    </alternativeName>
</protein>
<comment type="subcellular location">
    <subcellularLocation>
        <location>Membrane</location>
        <topology>Multi-pass membrane protein</topology>
    </subcellularLocation>
</comment>
<comment type="similarity">
    <text evidence="2">Belongs to the PRPH2/ROM1 family.</text>
</comment>
<feature type="chain" id="PRO_0000168116" description="Photoreceptor outer segment membrane glycoprotein 2">
    <location>
        <begin position="1"/>
        <end position="364"/>
    </location>
</feature>
<feature type="topological domain" description="Cytoplasmic" evidence="1">
    <location>
        <begin position="1"/>
        <end position="24"/>
    </location>
</feature>
<feature type="transmembrane region" description="Helical" evidence="1">
    <location>
        <begin position="25"/>
        <end position="43"/>
    </location>
</feature>
<feature type="topological domain" description="Lumenal" evidence="1">
    <location>
        <begin position="44"/>
        <end position="61"/>
    </location>
</feature>
<feature type="transmembrane region" description="Helical" evidence="1">
    <location>
        <begin position="62"/>
        <end position="80"/>
    </location>
</feature>
<feature type="topological domain" description="Cytoplasmic" evidence="1">
    <location>
        <begin position="81"/>
        <end position="99"/>
    </location>
</feature>
<feature type="transmembrane region" description="Helical" evidence="1">
    <location>
        <begin position="100"/>
        <end position="123"/>
    </location>
</feature>
<feature type="topological domain" description="Lumenal" evidence="1">
    <location>
        <begin position="124"/>
        <end position="264"/>
    </location>
</feature>
<feature type="transmembrane region" description="Helical" evidence="1">
    <location>
        <begin position="265"/>
        <end position="290"/>
    </location>
</feature>
<feature type="topological domain" description="Cytoplasmic" evidence="1">
    <location>
        <begin position="291"/>
        <end position="364"/>
    </location>
</feature>
<feature type="glycosylation site" description="N-linked (GlcNAc...) asparagine" evidence="1">
    <location>
        <position position="229"/>
    </location>
</feature>
<dbReference type="EMBL" id="AF031239">
    <property type="protein sequence ID" value="AAC06275.1"/>
    <property type="molecule type" value="mRNA"/>
</dbReference>
<dbReference type="RefSeq" id="NP_990368.1">
    <property type="nucleotide sequence ID" value="NM_205037.1"/>
</dbReference>
<dbReference type="SMR" id="O42282"/>
<dbReference type="STRING" id="9031.ENSGALP00000014944"/>
<dbReference type="GlyGen" id="O42282">
    <property type="glycosylation" value="1 site"/>
</dbReference>
<dbReference type="PaxDb" id="9031-ENSGALP00000014944"/>
<dbReference type="GeneID" id="395898"/>
<dbReference type="KEGG" id="gga:395898"/>
<dbReference type="CTD" id="395898"/>
<dbReference type="VEuPathDB" id="HostDB:geneid_395898"/>
<dbReference type="eggNOG" id="KOG3882">
    <property type="taxonomic scope" value="Eukaryota"/>
</dbReference>
<dbReference type="InParanoid" id="O42282"/>
<dbReference type="OrthoDB" id="9836210at2759"/>
<dbReference type="PhylomeDB" id="O42282"/>
<dbReference type="PRO" id="PR:O42282"/>
<dbReference type="Proteomes" id="UP000000539">
    <property type="component" value="Unassembled WGS sequence"/>
</dbReference>
<dbReference type="GO" id="GO:0005886">
    <property type="term" value="C:plasma membrane"/>
    <property type="evidence" value="ECO:0000318"/>
    <property type="project" value="GO_Central"/>
</dbReference>
<dbReference type="GO" id="GO:0072659">
    <property type="term" value="P:protein localization to plasma membrane"/>
    <property type="evidence" value="ECO:0000318"/>
    <property type="project" value="GO_Central"/>
</dbReference>
<dbReference type="GO" id="GO:0051604">
    <property type="term" value="P:protein maturation"/>
    <property type="evidence" value="ECO:0000318"/>
    <property type="project" value="GO_Central"/>
</dbReference>
<dbReference type="GO" id="GO:0007601">
    <property type="term" value="P:visual perception"/>
    <property type="evidence" value="ECO:0007669"/>
    <property type="project" value="InterPro"/>
</dbReference>
<dbReference type="CDD" id="cd03162">
    <property type="entry name" value="peripherin_like_LEL"/>
    <property type="match status" value="1"/>
</dbReference>
<dbReference type="FunFam" id="1.10.1450.10:FF:000002">
    <property type="entry name" value="Retinal outer segment membrane protein 1"/>
    <property type="match status" value="1"/>
</dbReference>
<dbReference type="Gene3D" id="1.10.1450.10">
    <property type="entry name" value="Tetraspanin"/>
    <property type="match status" value="1"/>
</dbReference>
<dbReference type="InterPro" id="IPR000830">
    <property type="entry name" value="Peripherin/rom-1"/>
</dbReference>
<dbReference type="InterPro" id="IPR018498">
    <property type="entry name" value="Peripherin/rom-1_CS"/>
</dbReference>
<dbReference type="InterPro" id="IPR042026">
    <property type="entry name" value="Peripherin_LEL"/>
</dbReference>
<dbReference type="InterPro" id="IPR018499">
    <property type="entry name" value="Tetraspanin/Peripherin"/>
</dbReference>
<dbReference type="InterPro" id="IPR008952">
    <property type="entry name" value="Tetraspanin_EC2_sf"/>
</dbReference>
<dbReference type="PANTHER" id="PTHR19282:SF184">
    <property type="entry name" value="PERIPHERIN 2 LIKE-RELATED"/>
    <property type="match status" value="1"/>
</dbReference>
<dbReference type="PANTHER" id="PTHR19282">
    <property type="entry name" value="TETRASPANIN"/>
    <property type="match status" value="1"/>
</dbReference>
<dbReference type="Pfam" id="PF00335">
    <property type="entry name" value="Tetraspanin"/>
    <property type="match status" value="1"/>
</dbReference>
<dbReference type="PRINTS" id="PR00218">
    <property type="entry name" value="PERIPHERNRDS"/>
</dbReference>
<dbReference type="SUPFAM" id="SSF48652">
    <property type="entry name" value="Tetraspanin"/>
    <property type="match status" value="1"/>
</dbReference>
<dbReference type="PROSITE" id="PS00930">
    <property type="entry name" value="RDS_ROM1"/>
    <property type="match status" value="1"/>
</dbReference>
<name>RDS2_CHICK</name>
<sequence length="364" mass="41181">MTVLKVKFTKTKRDKLAQILWILNWVSVVSGIILFSLGLFLKIEIKKRNEVMAKGDINSVPNMLISVGVIACVVNFLGGKICYDCSDANKFSRWKLIMLPYIICTFCFTFCILLGALMCYTMRNELEESLYLGLRDAIKFYKDTDIPGRCFLKKTVDMLQIGFQCCGNNGFRDWFEVQWVSARYLNMASKEVMDRFKSNVDGKFLVDGVPFSCCNPSSPRPCIQYHLTNNSAHYNYDFLTEELNIWVKGCREALLEYYTAIMRSIGIAALLIWLFELSVLIGVRYLQTAMKNVLLQGDLQGESDGWLLENSFVETAKYNINIIKNLGKANQISTVSGMNDPNINVQNTNCGKSNVTAKSIPAAS</sequence>
<keyword id="KW-0325">Glycoprotein</keyword>
<keyword id="KW-0472">Membrane</keyword>
<keyword id="KW-1185">Reference proteome</keyword>
<keyword id="KW-0812">Transmembrane</keyword>
<keyword id="KW-1133">Transmembrane helix</keyword>
<proteinExistence type="evidence at transcript level"/>
<accession>O42282</accession>
<reference key="1">
    <citation type="journal article" date="1998" name="Invest. Ophthalmol. Vis. Sci.">
        <title>Identification of two rds/peripherin homologs in the chick retina.</title>
        <authorList>
            <person name="Weng J."/>
            <person name="Belecky-Adams T."/>
            <person name="Adler R."/>
            <person name="Travis G.H."/>
        </authorList>
    </citation>
    <scope>NUCLEOTIDE SEQUENCE [MRNA]</scope>
    <source>
        <tissue>Retina</tissue>
    </source>
</reference>
<evidence type="ECO:0000255" key="1"/>
<evidence type="ECO:0000305" key="2"/>
<organism>
    <name type="scientific">Gallus gallus</name>
    <name type="common">Chicken</name>
    <dbReference type="NCBI Taxonomy" id="9031"/>
    <lineage>
        <taxon>Eukaryota</taxon>
        <taxon>Metazoa</taxon>
        <taxon>Chordata</taxon>
        <taxon>Craniata</taxon>
        <taxon>Vertebrata</taxon>
        <taxon>Euteleostomi</taxon>
        <taxon>Archelosauria</taxon>
        <taxon>Archosauria</taxon>
        <taxon>Dinosauria</taxon>
        <taxon>Saurischia</taxon>
        <taxon>Theropoda</taxon>
        <taxon>Coelurosauria</taxon>
        <taxon>Aves</taxon>
        <taxon>Neognathae</taxon>
        <taxon>Galloanserae</taxon>
        <taxon>Galliformes</taxon>
        <taxon>Phasianidae</taxon>
        <taxon>Phasianinae</taxon>
        <taxon>Gallus</taxon>
    </lineage>
</organism>